<keyword id="KW-1185">Reference proteome</keyword>
<keyword id="KW-0687">Ribonucleoprotein</keyword>
<keyword id="KW-0689">Ribosomal protein</keyword>
<protein>
    <recommendedName>
        <fullName evidence="1">Large ribosomal subunit protein bL12</fullName>
    </recommendedName>
    <alternativeName>
        <fullName evidence="2">50S ribosomal protein L7/L12</fullName>
    </alternativeName>
</protein>
<comment type="function">
    <text evidence="1">Forms part of the ribosomal stalk which helps the ribosome interact with GTP-bound translation factors. Is thus essential for accurate translation.</text>
</comment>
<comment type="subunit">
    <text evidence="1">Homodimer. Part of the ribosomal stalk of the 50S ribosomal subunit. Forms a multimeric L10(L12)X complex, where L10 forms an elongated spine to which 2 to 4 L12 dimers bind in a sequential fashion. Binds GTP-bound translation factors.</text>
</comment>
<comment type="similarity">
    <text evidence="1">Belongs to the bacterial ribosomal protein bL12 family.</text>
</comment>
<organism>
    <name type="scientific">Macrococcus caseolyticus (strain JCSC5402)</name>
    <name type="common">Macrococcoides caseolyticum</name>
    <dbReference type="NCBI Taxonomy" id="458233"/>
    <lineage>
        <taxon>Bacteria</taxon>
        <taxon>Bacillati</taxon>
        <taxon>Bacillota</taxon>
        <taxon>Bacilli</taxon>
        <taxon>Bacillales</taxon>
        <taxon>Staphylococcaceae</taxon>
        <taxon>Macrococcoides</taxon>
    </lineage>
</organism>
<proteinExistence type="inferred from homology"/>
<name>RL7_MACCJ</name>
<sequence length="121" mass="12540">MSNEKIIEMIKEMSVLELNDLVKAIEEEFGVTAAAPVAVAGAAGGEGAAAEKTEFDVELVSAGSSKIKVVKAVKEATGLGLKDAKDLVDNAPKVVKEAVSKDEAEELKAKLEEAGATVEVK</sequence>
<accession>B9E8Q7</accession>
<evidence type="ECO:0000255" key="1">
    <source>
        <dbReference type="HAMAP-Rule" id="MF_00368"/>
    </source>
</evidence>
<evidence type="ECO:0000305" key="2"/>
<dbReference type="EMBL" id="AP009484">
    <property type="protein sequence ID" value="BAH18575.1"/>
    <property type="molecule type" value="Genomic_DNA"/>
</dbReference>
<dbReference type="RefSeq" id="WP_015912367.1">
    <property type="nucleotide sequence ID" value="NC_011999.1"/>
</dbReference>
<dbReference type="SMR" id="B9E8Q7"/>
<dbReference type="STRING" id="458233.MCCL_1868"/>
<dbReference type="GeneID" id="61130254"/>
<dbReference type="KEGG" id="mcl:MCCL_1868"/>
<dbReference type="eggNOG" id="COG0222">
    <property type="taxonomic scope" value="Bacteria"/>
</dbReference>
<dbReference type="HOGENOM" id="CLU_086499_3_2_9"/>
<dbReference type="OrthoDB" id="9811748at2"/>
<dbReference type="Proteomes" id="UP000001383">
    <property type="component" value="Chromosome"/>
</dbReference>
<dbReference type="GO" id="GO:0022625">
    <property type="term" value="C:cytosolic large ribosomal subunit"/>
    <property type="evidence" value="ECO:0007669"/>
    <property type="project" value="TreeGrafter"/>
</dbReference>
<dbReference type="GO" id="GO:0003729">
    <property type="term" value="F:mRNA binding"/>
    <property type="evidence" value="ECO:0007669"/>
    <property type="project" value="TreeGrafter"/>
</dbReference>
<dbReference type="GO" id="GO:0003735">
    <property type="term" value="F:structural constituent of ribosome"/>
    <property type="evidence" value="ECO:0007669"/>
    <property type="project" value="InterPro"/>
</dbReference>
<dbReference type="GO" id="GO:0006412">
    <property type="term" value="P:translation"/>
    <property type="evidence" value="ECO:0007669"/>
    <property type="project" value="UniProtKB-UniRule"/>
</dbReference>
<dbReference type="CDD" id="cd00387">
    <property type="entry name" value="Ribosomal_L7_L12"/>
    <property type="match status" value="1"/>
</dbReference>
<dbReference type="FunFam" id="1.20.5.710:FF:000002">
    <property type="entry name" value="50S ribosomal protein L7/L12"/>
    <property type="match status" value="1"/>
</dbReference>
<dbReference type="FunFam" id="3.30.1390.10:FF:000001">
    <property type="entry name" value="50S ribosomal protein L7/L12"/>
    <property type="match status" value="1"/>
</dbReference>
<dbReference type="Gene3D" id="3.30.1390.10">
    <property type="match status" value="1"/>
</dbReference>
<dbReference type="Gene3D" id="1.20.5.710">
    <property type="entry name" value="Single helix bin"/>
    <property type="match status" value="1"/>
</dbReference>
<dbReference type="HAMAP" id="MF_00368">
    <property type="entry name" value="Ribosomal_bL12"/>
    <property type="match status" value="1"/>
</dbReference>
<dbReference type="InterPro" id="IPR000206">
    <property type="entry name" value="Ribosomal_bL12"/>
</dbReference>
<dbReference type="InterPro" id="IPR013823">
    <property type="entry name" value="Ribosomal_bL12_C"/>
</dbReference>
<dbReference type="InterPro" id="IPR014719">
    <property type="entry name" value="Ribosomal_bL12_C/ClpS-like"/>
</dbReference>
<dbReference type="InterPro" id="IPR008932">
    <property type="entry name" value="Ribosomal_bL12_oligo"/>
</dbReference>
<dbReference type="InterPro" id="IPR036235">
    <property type="entry name" value="Ribosomal_bL12_oligo_N_sf"/>
</dbReference>
<dbReference type="NCBIfam" id="TIGR00855">
    <property type="entry name" value="L12"/>
    <property type="match status" value="1"/>
</dbReference>
<dbReference type="PANTHER" id="PTHR45987">
    <property type="entry name" value="39S RIBOSOMAL PROTEIN L12"/>
    <property type="match status" value="1"/>
</dbReference>
<dbReference type="PANTHER" id="PTHR45987:SF4">
    <property type="entry name" value="LARGE RIBOSOMAL SUBUNIT PROTEIN BL12M"/>
    <property type="match status" value="1"/>
</dbReference>
<dbReference type="Pfam" id="PF00542">
    <property type="entry name" value="Ribosomal_L12"/>
    <property type="match status" value="1"/>
</dbReference>
<dbReference type="Pfam" id="PF16320">
    <property type="entry name" value="Ribosomal_L12_N"/>
    <property type="match status" value="1"/>
</dbReference>
<dbReference type="SUPFAM" id="SSF54736">
    <property type="entry name" value="ClpS-like"/>
    <property type="match status" value="1"/>
</dbReference>
<dbReference type="SUPFAM" id="SSF48300">
    <property type="entry name" value="Ribosomal protein L7/12, oligomerisation (N-terminal) domain"/>
    <property type="match status" value="1"/>
</dbReference>
<reference key="1">
    <citation type="journal article" date="2009" name="J. Bacteriol.">
        <title>Complete genome sequence of Macrococcus caseolyticus strain JCSCS5402, reflecting the ancestral genome of the human-pathogenic staphylococci.</title>
        <authorList>
            <person name="Baba T."/>
            <person name="Kuwahara-Arai K."/>
            <person name="Uchiyama I."/>
            <person name="Takeuchi F."/>
            <person name="Ito T."/>
            <person name="Hiramatsu K."/>
        </authorList>
    </citation>
    <scope>NUCLEOTIDE SEQUENCE [LARGE SCALE GENOMIC DNA]</scope>
    <source>
        <strain>JCSC5402</strain>
    </source>
</reference>
<gene>
    <name evidence="1" type="primary">rplL</name>
    <name type="ordered locus">MCCL_1868</name>
</gene>
<feature type="chain" id="PRO_1000195804" description="Large ribosomal subunit protein bL12">
    <location>
        <begin position="1"/>
        <end position="121"/>
    </location>
</feature>